<reference key="1">
    <citation type="journal article" date="2005" name="Nucleic Acids Res.">
        <title>Genomic blueprint of Hahella chejuensis, a marine microbe producing an algicidal agent.</title>
        <authorList>
            <person name="Jeong H."/>
            <person name="Yim J.H."/>
            <person name="Lee C."/>
            <person name="Choi S.-H."/>
            <person name="Park Y.K."/>
            <person name="Yoon S.H."/>
            <person name="Hur C.-G."/>
            <person name="Kang H.-Y."/>
            <person name="Kim D."/>
            <person name="Lee H.H."/>
            <person name="Park K.H."/>
            <person name="Park S.-H."/>
            <person name="Park H.-S."/>
            <person name="Lee H.K."/>
            <person name="Oh T.K."/>
            <person name="Kim J.F."/>
        </authorList>
    </citation>
    <scope>NUCLEOTIDE SEQUENCE [LARGE SCALE GENOMIC DNA]</scope>
    <source>
        <strain>KCTC 2396</strain>
    </source>
</reference>
<name>FOLD_HAHCH</name>
<feature type="chain" id="PRO_0000268367" description="Bifunctional protein FolD">
    <location>
        <begin position="1"/>
        <end position="294"/>
    </location>
</feature>
<feature type="binding site" evidence="1">
    <location>
        <begin position="175"/>
        <end position="177"/>
    </location>
    <ligand>
        <name>NADP(+)</name>
        <dbReference type="ChEBI" id="CHEBI:58349"/>
    </ligand>
</feature>
<feature type="binding site" evidence="1">
    <location>
        <position position="241"/>
    </location>
    <ligand>
        <name>NADP(+)</name>
        <dbReference type="ChEBI" id="CHEBI:58349"/>
    </ligand>
</feature>
<accession>Q2SK39</accession>
<protein>
    <recommendedName>
        <fullName evidence="1">Bifunctional protein FolD</fullName>
    </recommendedName>
    <domain>
        <recommendedName>
            <fullName evidence="1">Methylenetetrahydrofolate dehydrogenase</fullName>
            <ecNumber evidence="1">1.5.1.5</ecNumber>
        </recommendedName>
    </domain>
    <domain>
        <recommendedName>
            <fullName evidence="1">Methenyltetrahydrofolate cyclohydrolase</fullName>
            <ecNumber evidence="1">3.5.4.9</ecNumber>
        </recommendedName>
    </domain>
</protein>
<sequence length="294" mass="31675">MTMTHAQNNHHARLIDGKQVAADVRANVAEGVKARIDSGLRPPGLAVVLVGEDPASQVYVKNKTKACEEVGFLSQKYTLEESTTEEELLKLIDTLNEDNAIDGILVQLPLPTHMDADNILERIKPDKDVDGFHPYNLGRLAQRMPVLRPCTPKGIMTLLARTGVELRGKDALVVGASNIVGRPMGLELLLAGCTVTITHRFTVNLPAKVSQADIVVVAVGRPGIVKGEWIKPGAIVIDVGINRRDDGALVGDIEFNEAAERASWITPVPGGVGPMTVATLMENTLYAANHLHKD</sequence>
<comment type="function">
    <text evidence="1">Catalyzes the oxidation of 5,10-methylenetetrahydrofolate to 5,10-methenyltetrahydrofolate and then the hydrolysis of 5,10-methenyltetrahydrofolate to 10-formyltetrahydrofolate.</text>
</comment>
<comment type="catalytic activity">
    <reaction evidence="1">
        <text>(6R)-5,10-methylene-5,6,7,8-tetrahydrofolate + NADP(+) = (6R)-5,10-methenyltetrahydrofolate + NADPH</text>
        <dbReference type="Rhea" id="RHEA:22812"/>
        <dbReference type="ChEBI" id="CHEBI:15636"/>
        <dbReference type="ChEBI" id="CHEBI:57455"/>
        <dbReference type="ChEBI" id="CHEBI:57783"/>
        <dbReference type="ChEBI" id="CHEBI:58349"/>
        <dbReference type="EC" id="1.5.1.5"/>
    </reaction>
</comment>
<comment type="catalytic activity">
    <reaction evidence="1">
        <text>(6R)-5,10-methenyltetrahydrofolate + H2O = (6R)-10-formyltetrahydrofolate + H(+)</text>
        <dbReference type="Rhea" id="RHEA:23700"/>
        <dbReference type="ChEBI" id="CHEBI:15377"/>
        <dbReference type="ChEBI" id="CHEBI:15378"/>
        <dbReference type="ChEBI" id="CHEBI:57455"/>
        <dbReference type="ChEBI" id="CHEBI:195366"/>
        <dbReference type="EC" id="3.5.4.9"/>
    </reaction>
</comment>
<comment type="pathway">
    <text evidence="1">One-carbon metabolism; tetrahydrofolate interconversion.</text>
</comment>
<comment type="subunit">
    <text evidence="1">Homodimer.</text>
</comment>
<comment type="similarity">
    <text evidence="1">Belongs to the tetrahydrofolate dehydrogenase/cyclohydrolase family.</text>
</comment>
<organism>
    <name type="scientific">Hahella chejuensis (strain KCTC 2396)</name>
    <dbReference type="NCBI Taxonomy" id="349521"/>
    <lineage>
        <taxon>Bacteria</taxon>
        <taxon>Pseudomonadati</taxon>
        <taxon>Pseudomonadota</taxon>
        <taxon>Gammaproteobacteria</taxon>
        <taxon>Oceanospirillales</taxon>
        <taxon>Hahellaceae</taxon>
        <taxon>Hahella</taxon>
    </lineage>
</organism>
<dbReference type="EC" id="1.5.1.5" evidence="1"/>
<dbReference type="EC" id="3.5.4.9" evidence="1"/>
<dbReference type="EMBL" id="CP000155">
    <property type="protein sequence ID" value="ABC28985.1"/>
    <property type="molecule type" value="Genomic_DNA"/>
</dbReference>
<dbReference type="RefSeq" id="WP_011396055.1">
    <property type="nucleotide sequence ID" value="NC_007645.1"/>
</dbReference>
<dbReference type="SMR" id="Q2SK39"/>
<dbReference type="STRING" id="349521.HCH_02155"/>
<dbReference type="KEGG" id="hch:HCH_02155"/>
<dbReference type="eggNOG" id="COG0190">
    <property type="taxonomic scope" value="Bacteria"/>
</dbReference>
<dbReference type="HOGENOM" id="CLU_034045_2_1_6"/>
<dbReference type="OrthoDB" id="9803580at2"/>
<dbReference type="UniPathway" id="UPA00193"/>
<dbReference type="Proteomes" id="UP000000238">
    <property type="component" value="Chromosome"/>
</dbReference>
<dbReference type="GO" id="GO:0005829">
    <property type="term" value="C:cytosol"/>
    <property type="evidence" value="ECO:0007669"/>
    <property type="project" value="TreeGrafter"/>
</dbReference>
<dbReference type="GO" id="GO:0004477">
    <property type="term" value="F:methenyltetrahydrofolate cyclohydrolase activity"/>
    <property type="evidence" value="ECO:0007669"/>
    <property type="project" value="UniProtKB-UniRule"/>
</dbReference>
<dbReference type="GO" id="GO:0004488">
    <property type="term" value="F:methylenetetrahydrofolate dehydrogenase (NADP+) activity"/>
    <property type="evidence" value="ECO:0007669"/>
    <property type="project" value="UniProtKB-UniRule"/>
</dbReference>
<dbReference type="GO" id="GO:0000105">
    <property type="term" value="P:L-histidine biosynthetic process"/>
    <property type="evidence" value="ECO:0007669"/>
    <property type="project" value="UniProtKB-KW"/>
</dbReference>
<dbReference type="GO" id="GO:0009086">
    <property type="term" value="P:methionine biosynthetic process"/>
    <property type="evidence" value="ECO:0007669"/>
    <property type="project" value="UniProtKB-KW"/>
</dbReference>
<dbReference type="GO" id="GO:0006164">
    <property type="term" value="P:purine nucleotide biosynthetic process"/>
    <property type="evidence" value="ECO:0007669"/>
    <property type="project" value="UniProtKB-KW"/>
</dbReference>
<dbReference type="GO" id="GO:0035999">
    <property type="term" value="P:tetrahydrofolate interconversion"/>
    <property type="evidence" value="ECO:0007669"/>
    <property type="project" value="UniProtKB-UniRule"/>
</dbReference>
<dbReference type="CDD" id="cd01080">
    <property type="entry name" value="NAD_bind_m-THF_DH_Cyclohyd"/>
    <property type="match status" value="1"/>
</dbReference>
<dbReference type="FunFam" id="3.40.50.10860:FF:000001">
    <property type="entry name" value="Bifunctional protein FolD"/>
    <property type="match status" value="1"/>
</dbReference>
<dbReference type="FunFam" id="3.40.50.720:FF:000006">
    <property type="entry name" value="Bifunctional protein FolD"/>
    <property type="match status" value="1"/>
</dbReference>
<dbReference type="Gene3D" id="3.40.50.10860">
    <property type="entry name" value="Leucine Dehydrogenase, chain A, domain 1"/>
    <property type="match status" value="1"/>
</dbReference>
<dbReference type="Gene3D" id="3.40.50.720">
    <property type="entry name" value="NAD(P)-binding Rossmann-like Domain"/>
    <property type="match status" value="1"/>
</dbReference>
<dbReference type="HAMAP" id="MF_01576">
    <property type="entry name" value="THF_DHG_CYH"/>
    <property type="match status" value="1"/>
</dbReference>
<dbReference type="InterPro" id="IPR046346">
    <property type="entry name" value="Aminoacid_DH-like_N_sf"/>
</dbReference>
<dbReference type="InterPro" id="IPR036291">
    <property type="entry name" value="NAD(P)-bd_dom_sf"/>
</dbReference>
<dbReference type="InterPro" id="IPR000672">
    <property type="entry name" value="THF_DH/CycHdrlase"/>
</dbReference>
<dbReference type="InterPro" id="IPR020630">
    <property type="entry name" value="THF_DH/CycHdrlase_cat_dom"/>
</dbReference>
<dbReference type="InterPro" id="IPR020867">
    <property type="entry name" value="THF_DH/CycHdrlase_CS"/>
</dbReference>
<dbReference type="InterPro" id="IPR020631">
    <property type="entry name" value="THF_DH/CycHdrlase_NAD-bd_dom"/>
</dbReference>
<dbReference type="NCBIfam" id="NF008058">
    <property type="entry name" value="PRK10792.1"/>
    <property type="match status" value="1"/>
</dbReference>
<dbReference type="NCBIfam" id="NF010783">
    <property type="entry name" value="PRK14186.1"/>
    <property type="match status" value="1"/>
</dbReference>
<dbReference type="PANTHER" id="PTHR48099:SF5">
    <property type="entry name" value="C-1-TETRAHYDROFOLATE SYNTHASE, CYTOPLASMIC"/>
    <property type="match status" value="1"/>
</dbReference>
<dbReference type="PANTHER" id="PTHR48099">
    <property type="entry name" value="C-1-TETRAHYDROFOLATE SYNTHASE, CYTOPLASMIC-RELATED"/>
    <property type="match status" value="1"/>
</dbReference>
<dbReference type="Pfam" id="PF00763">
    <property type="entry name" value="THF_DHG_CYH"/>
    <property type="match status" value="1"/>
</dbReference>
<dbReference type="Pfam" id="PF02882">
    <property type="entry name" value="THF_DHG_CYH_C"/>
    <property type="match status" value="1"/>
</dbReference>
<dbReference type="PRINTS" id="PR00085">
    <property type="entry name" value="THFDHDRGNASE"/>
</dbReference>
<dbReference type="SUPFAM" id="SSF53223">
    <property type="entry name" value="Aminoacid dehydrogenase-like, N-terminal domain"/>
    <property type="match status" value="1"/>
</dbReference>
<dbReference type="SUPFAM" id="SSF51735">
    <property type="entry name" value="NAD(P)-binding Rossmann-fold domains"/>
    <property type="match status" value="1"/>
</dbReference>
<dbReference type="PROSITE" id="PS00766">
    <property type="entry name" value="THF_DHG_CYH_1"/>
    <property type="match status" value="1"/>
</dbReference>
<dbReference type="PROSITE" id="PS00767">
    <property type="entry name" value="THF_DHG_CYH_2"/>
    <property type="match status" value="1"/>
</dbReference>
<evidence type="ECO:0000255" key="1">
    <source>
        <dbReference type="HAMAP-Rule" id="MF_01576"/>
    </source>
</evidence>
<keyword id="KW-0028">Amino-acid biosynthesis</keyword>
<keyword id="KW-0368">Histidine biosynthesis</keyword>
<keyword id="KW-0378">Hydrolase</keyword>
<keyword id="KW-0486">Methionine biosynthesis</keyword>
<keyword id="KW-0511">Multifunctional enzyme</keyword>
<keyword id="KW-0521">NADP</keyword>
<keyword id="KW-0554">One-carbon metabolism</keyword>
<keyword id="KW-0560">Oxidoreductase</keyword>
<keyword id="KW-0658">Purine biosynthesis</keyword>
<keyword id="KW-1185">Reference proteome</keyword>
<gene>
    <name evidence="1" type="primary">folD</name>
    <name type="ordered locus">HCH_02155</name>
</gene>
<proteinExistence type="inferred from homology"/>